<gene>
    <name evidence="1" type="primary">rplW</name>
    <name type="ordered locus">Meso_1676</name>
</gene>
<reference key="1">
    <citation type="submission" date="2006-06" db="EMBL/GenBank/DDBJ databases">
        <title>Complete sequence of chromosome of Mesorhizobium sp. BNC1.</title>
        <authorList>
            <consortium name="US DOE Joint Genome Institute"/>
            <person name="Copeland A."/>
            <person name="Lucas S."/>
            <person name="Lapidus A."/>
            <person name="Barry K."/>
            <person name="Detter J.C."/>
            <person name="Glavina del Rio T."/>
            <person name="Hammon N."/>
            <person name="Israni S."/>
            <person name="Dalin E."/>
            <person name="Tice H."/>
            <person name="Pitluck S."/>
            <person name="Chertkov O."/>
            <person name="Brettin T."/>
            <person name="Bruce D."/>
            <person name="Han C."/>
            <person name="Tapia R."/>
            <person name="Gilna P."/>
            <person name="Schmutz J."/>
            <person name="Larimer F."/>
            <person name="Land M."/>
            <person name="Hauser L."/>
            <person name="Kyrpides N."/>
            <person name="Mikhailova N."/>
            <person name="Richardson P."/>
        </authorList>
    </citation>
    <scope>NUCLEOTIDE SEQUENCE [LARGE SCALE GENOMIC DNA]</scope>
    <source>
        <strain>BNC1</strain>
    </source>
</reference>
<name>RL23_CHESB</name>
<protein>
    <recommendedName>
        <fullName evidence="1">Large ribosomal subunit protein uL23</fullName>
    </recommendedName>
    <alternativeName>
        <fullName evidence="2">50S ribosomal protein L23</fullName>
    </alternativeName>
</protein>
<sequence>MTDLRHYDVIVSPAITEKSTMASENNQVVFNVARKATKPEIKAAVEALFNVKVTGVNTLVRKGKVKRFRGTVGRQSDVKKAIVTLAEGQSIDVATGL</sequence>
<proteinExistence type="inferred from homology"/>
<evidence type="ECO:0000255" key="1">
    <source>
        <dbReference type="HAMAP-Rule" id="MF_01369"/>
    </source>
</evidence>
<evidence type="ECO:0000305" key="2"/>
<dbReference type="EMBL" id="CP000390">
    <property type="protein sequence ID" value="ABG63071.1"/>
    <property type="molecule type" value="Genomic_DNA"/>
</dbReference>
<dbReference type="SMR" id="Q11HQ4"/>
<dbReference type="STRING" id="266779.Meso_1676"/>
<dbReference type="KEGG" id="mes:Meso_1676"/>
<dbReference type="eggNOG" id="COG0089">
    <property type="taxonomic scope" value="Bacteria"/>
</dbReference>
<dbReference type="HOGENOM" id="CLU_037562_3_1_5"/>
<dbReference type="OrthoDB" id="9793353at2"/>
<dbReference type="GO" id="GO:1990904">
    <property type="term" value="C:ribonucleoprotein complex"/>
    <property type="evidence" value="ECO:0007669"/>
    <property type="project" value="UniProtKB-KW"/>
</dbReference>
<dbReference type="GO" id="GO:0005840">
    <property type="term" value="C:ribosome"/>
    <property type="evidence" value="ECO:0007669"/>
    <property type="project" value="UniProtKB-KW"/>
</dbReference>
<dbReference type="GO" id="GO:0019843">
    <property type="term" value="F:rRNA binding"/>
    <property type="evidence" value="ECO:0007669"/>
    <property type="project" value="UniProtKB-UniRule"/>
</dbReference>
<dbReference type="GO" id="GO:0003735">
    <property type="term" value="F:structural constituent of ribosome"/>
    <property type="evidence" value="ECO:0007669"/>
    <property type="project" value="InterPro"/>
</dbReference>
<dbReference type="GO" id="GO:0006412">
    <property type="term" value="P:translation"/>
    <property type="evidence" value="ECO:0007669"/>
    <property type="project" value="UniProtKB-UniRule"/>
</dbReference>
<dbReference type="FunFam" id="3.30.70.330:FF:000001">
    <property type="entry name" value="50S ribosomal protein L23"/>
    <property type="match status" value="1"/>
</dbReference>
<dbReference type="Gene3D" id="3.30.70.330">
    <property type="match status" value="1"/>
</dbReference>
<dbReference type="HAMAP" id="MF_01369_B">
    <property type="entry name" value="Ribosomal_uL23_B"/>
    <property type="match status" value="1"/>
</dbReference>
<dbReference type="InterPro" id="IPR012677">
    <property type="entry name" value="Nucleotide-bd_a/b_plait_sf"/>
</dbReference>
<dbReference type="InterPro" id="IPR013025">
    <property type="entry name" value="Ribosomal_uL23-like"/>
</dbReference>
<dbReference type="InterPro" id="IPR012678">
    <property type="entry name" value="Ribosomal_uL23/eL15/eS24_sf"/>
</dbReference>
<dbReference type="NCBIfam" id="NF004359">
    <property type="entry name" value="PRK05738.1-3"/>
    <property type="match status" value="1"/>
</dbReference>
<dbReference type="NCBIfam" id="NF004360">
    <property type="entry name" value="PRK05738.1-5"/>
    <property type="match status" value="1"/>
</dbReference>
<dbReference type="NCBIfam" id="NF004363">
    <property type="entry name" value="PRK05738.2-4"/>
    <property type="match status" value="1"/>
</dbReference>
<dbReference type="PANTHER" id="PTHR11620">
    <property type="entry name" value="60S RIBOSOMAL PROTEIN L23A"/>
    <property type="match status" value="1"/>
</dbReference>
<dbReference type="Pfam" id="PF00276">
    <property type="entry name" value="Ribosomal_L23"/>
    <property type="match status" value="1"/>
</dbReference>
<dbReference type="SUPFAM" id="SSF54189">
    <property type="entry name" value="Ribosomal proteins S24e, L23 and L15e"/>
    <property type="match status" value="1"/>
</dbReference>
<keyword id="KW-0687">Ribonucleoprotein</keyword>
<keyword id="KW-0689">Ribosomal protein</keyword>
<keyword id="KW-0694">RNA-binding</keyword>
<keyword id="KW-0699">rRNA-binding</keyword>
<accession>Q11HQ4</accession>
<feature type="chain" id="PRO_0000272772" description="Large ribosomal subunit protein uL23">
    <location>
        <begin position="1"/>
        <end position="97"/>
    </location>
</feature>
<comment type="function">
    <text evidence="1">One of the early assembly proteins it binds 23S rRNA. One of the proteins that surrounds the polypeptide exit tunnel on the outside of the ribosome. Forms the main docking site for trigger factor binding to the ribosome.</text>
</comment>
<comment type="subunit">
    <text evidence="1">Part of the 50S ribosomal subunit. Contacts protein L29, and trigger factor when it is bound to the ribosome.</text>
</comment>
<comment type="similarity">
    <text evidence="1">Belongs to the universal ribosomal protein uL23 family.</text>
</comment>
<organism>
    <name type="scientific">Chelativorans sp. (strain BNC1)</name>
    <dbReference type="NCBI Taxonomy" id="266779"/>
    <lineage>
        <taxon>Bacteria</taxon>
        <taxon>Pseudomonadati</taxon>
        <taxon>Pseudomonadota</taxon>
        <taxon>Alphaproteobacteria</taxon>
        <taxon>Hyphomicrobiales</taxon>
        <taxon>Phyllobacteriaceae</taxon>
        <taxon>Chelativorans</taxon>
    </lineage>
</organism>